<accession>C0HKK2</accession>
<evidence type="ECO:0000255" key="1">
    <source>
        <dbReference type="PROSITE-ProRule" id="PRU00395"/>
    </source>
</evidence>
<evidence type="ECO:0000269" key="2">
    <source>
    </source>
</evidence>
<evidence type="ECO:0000303" key="3">
    <source>
    </source>
</evidence>
<evidence type="ECO:0000305" key="4"/>
<comment type="function">
    <text evidence="1">Probably participates in a plant defense mechanism.</text>
</comment>
<comment type="domain">
    <text evidence="4">The presence of a 'disulfide through disulfide knot' structurally defines this protein as a knottin.</text>
</comment>
<comment type="PTM">
    <text evidence="1">This is a cyclic peptide.</text>
</comment>
<comment type="similarity">
    <text evidence="1">Belongs to the cyclotide family.</text>
</comment>
<comment type="caution">
    <text evidence="1">This peptide is cyclic. The start position was chosen by similarity to Oak1 (kalata B1) for which the DNA sequence is known.</text>
</comment>
<organism evidence="3">
    <name type="scientific">Viola inconspicua</name>
    <dbReference type="NCBI Taxonomy" id="591090"/>
    <lineage>
        <taxon>Eukaryota</taxon>
        <taxon>Viridiplantae</taxon>
        <taxon>Streptophyta</taxon>
        <taxon>Embryophyta</taxon>
        <taxon>Tracheophyta</taxon>
        <taxon>Spermatophyta</taxon>
        <taxon>Magnoliopsida</taxon>
        <taxon>eudicotyledons</taxon>
        <taxon>Gunneridae</taxon>
        <taxon>Pentapetalae</taxon>
        <taxon>rosids</taxon>
        <taxon>fabids</taxon>
        <taxon>Malpighiales</taxon>
        <taxon>Violaceae</taxon>
        <taxon>Viola</taxon>
        <taxon>Viola subgen. Viola</taxon>
        <taxon>Viola sect. Plagiostigma</taxon>
        <taxon>Viola subsect. Patellares</taxon>
    </lineage>
</organism>
<feature type="peptide" id="PRO_0000441375" description="Cyclotide vinc-B" evidence="2">
    <location>
        <begin position="1"/>
        <end position="31"/>
    </location>
</feature>
<feature type="disulfide bond" evidence="1">
    <location>
        <begin position="6"/>
        <end position="20"/>
    </location>
</feature>
<feature type="disulfide bond" evidence="1">
    <location>
        <begin position="10"/>
        <end position="22"/>
    </location>
</feature>
<feature type="disulfide bond" evidence="1">
    <location>
        <begin position="15"/>
        <end position="28"/>
    </location>
</feature>
<feature type="cross-link" description="Cyclopeptide (Gly-Asn)" evidence="3">
    <location>
        <begin position="1"/>
        <end position="31"/>
    </location>
</feature>
<name>CYVNB_VIOIN</name>
<dbReference type="SMR" id="C0HKK2"/>
<dbReference type="GO" id="GO:0006952">
    <property type="term" value="P:defense response"/>
    <property type="evidence" value="ECO:0007669"/>
    <property type="project" value="UniProtKB-KW"/>
</dbReference>
<dbReference type="InterPro" id="IPR005535">
    <property type="entry name" value="Cyclotide"/>
</dbReference>
<dbReference type="InterPro" id="IPR036146">
    <property type="entry name" value="Cyclotide_sf"/>
</dbReference>
<dbReference type="Pfam" id="PF03784">
    <property type="entry name" value="Cyclotide"/>
    <property type="match status" value="1"/>
</dbReference>
<dbReference type="SUPFAM" id="SSF57038">
    <property type="entry name" value="Cyclotides"/>
    <property type="match status" value="1"/>
</dbReference>
<dbReference type="PROSITE" id="PS51052">
    <property type="entry name" value="CYCLOTIDE"/>
    <property type="match status" value="1"/>
</dbReference>
<keyword id="KW-0903">Direct protein sequencing</keyword>
<keyword id="KW-1015">Disulfide bond</keyword>
<keyword id="KW-0611">Plant defense</keyword>
<sequence>GSIPACGESCFKGKCYTPGCTCSKYPLCAKN</sequence>
<proteinExistence type="evidence at protein level"/>
<protein>
    <recommendedName>
        <fullName evidence="3">Cyclotide vinc-B</fullName>
    </recommendedName>
</protein>
<reference evidence="4" key="1">
    <citation type="journal article" date="2017" name="J. Nat. Prod.">
        <title>Understanding the Diversity and Distribution of Cyclotides from Plants of Varied Genetic Origin.</title>
        <authorList>
            <person name="Ravipati A.S."/>
            <person name="Poth A.G."/>
            <person name="Troeira Henriques S."/>
            <person name="Bhandari M."/>
            <person name="Huang Y.H."/>
            <person name="Nino J."/>
            <person name="Colgrave M.L."/>
            <person name="Craik D.J."/>
        </authorList>
    </citation>
    <scope>PROTEIN SEQUENCE</scope>
</reference>